<gene>
    <name evidence="1" type="primary">hmuV</name>
    <name type="ordered locus">Sden_0784</name>
</gene>
<dbReference type="EC" id="7.6.2.-" evidence="1"/>
<dbReference type="EMBL" id="CP000302">
    <property type="protein sequence ID" value="ABE54074.1"/>
    <property type="molecule type" value="Genomic_DNA"/>
</dbReference>
<dbReference type="RefSeq" id="WP_011495239.1">
    <property type="nucleotide sequence ID" value="NC_007954.1"/>
</dbReference>
<dbReference type="SMR" id="Q12R52"/>
<dbReference type="STRING" id="318161.Sden_0784"/>
<dbReference type="KEGG" id="sdn:Sden_0784"/>
<dbReference type="eggNOG" id="COG4559">
    <property type="taxonomic scope" value="Bacteria"/>
</dbReference>
<dbReference type="HOGENOM" id="CLU_000604_1_11_6"/>
<dbReference type="OrthoDB" id="5292475at2"/>
<dbReference type="Proteomes" id="UP000001982">
    <property type="component" value="Chromosome"/>
</dbReference>
<dbReference type="GO" id="GO:0005886">
    <property type="term" value="C:plasma membrane"/>
    <property type="evidence" value="ECO:0007669"/>
    <property type="project" value="UniProtKB-SubCell"/>
</dbReference>
<dbReference type="GO" id="GO:0005524">
    <property type="term" value="F:ATP binding"/>
    <property type="evidence" value="ECO:0007669"/>
    <property type="project" value="UniProtKB-KW"/>
</dbReference>
<dbReference type="GO" id="GO:0016887">
    <property type="term" value="F:ATP hydrolysis activity"/>
    <property type="evidence" value="ECO:0007669"/>
    <property type="project" value="InterPro"/>
</dbReference>
<dbReference type="CDD" id="cd03214">
    <property type="entry name" value="ABC_Iron-Siderophores_B12_Hemin"/>
    <property type="match status" value="1"/>
</dbReference>
<dbReference type="FunFam" id="3.40.50.300:FF:000134">
    <property type="entry name" value="Iron-enterobactin ABC transporter ATP-binding protein"/>
    <property type="match status" value="1"/>
</dbReference>
<dbReference type="Gene3D" id="3.40.50.300">
    <property type="entry name" value="P-loop containing nucleotide triphosphate hydrolases"/>
    <property type="match status" value="1"/>
</dbReference>
<dbReference type="InterPro" id="IPR003593">
    <property type="entry name" value="AAA+_ATPase"/>
</dbReference>
<dbReference type="InterPro" id="IPR003439">
    <property type="entry name" value="ABC_transporter-like_ATP-bd"/>
</dbReference>
<dbReference type="InterPro" id="IPR027417">
    <property type="entry name" value="P-loop_NTPase"/>
</dbReference>
<dbReference type="NCBIfam" id="NF010068">
    <property type="entry name" value="PRK13548.1"/>
    <property type="match status" value="1"/>
</dbReference>
<dbReference type="PANTHER" id="PTHR42794">
    <property type="entry name" value="HEMIN IMPORT ATP-BINDING PROTEIN HMUV"/>
    <property type="match status" value="1"/>
</dbReference>
<dbReference type="PANTHER" id="PTHR42794:SF1">
    <property type="entry name" value="HEMIN IMPORT ATP-BINDING PROTEIN HMUV"/>
    <property type="match status" value="1"/>
</dbReference>
<dbReference type="Pfam" id="PF00005">
    <property type="entry name" value="ABC_tran"/>
    <property type="match status" value="1"/>
</dbReference>
<dbReference type="SMART" id="SM00382">
    <property type="entry name" value="AAA"/>
    <property type="match status" value="1"/>
</dbReference>
<dbReference type="SUPFAM" id="SSF52540">
    <property type="entry name" value="P-loop containing nucleoside triphosphate hydrolases"/>
    <property type="match status" value="1"/>
</dbReference>
<dbReference type="PROSITE" id="PS50893">
    <property type="entry name" value="ABC_TRANSPORTER_2"/>
    <property type="match status" value="1"/>
</dbReference>
<dbReference type="PROSITE" id="PS51261">
    <property type="entry name" value="HMUV"/>
    <property type="match status" value="1"/>
</dbReference>
<sequence>MLNINQVNINLGRKPLLKNISLDIRSGEVTALLGPNGAGKSSLLKALCQSLKTESGEISFYQQPLGQWPKAELARCLAVLPQSSSLSFGFTVEEVVALGLYPLTISQQAGKALVASQLARLDLSPLANQAYPSLSGGEKQRVHLARVLTQLAQAPRAPLLLLDEPTSALDLAQQHKVLTLARELAHSQGYGVIVVLHDLNQAARYADNIVVINNGEIVKQGSPQQVLTKDTLSQVWHYDAQFIHTQDSAMPLIV</sequence>
<accession>Q12R52</accession>
<proteinExistence type="inferred from homology"/>
<reference key="1">
    <citation type="submission" date="2006-03" db="EMBL/GenBank/DDBJ databases">
        <title>Complete sequence of Shewanella denitrificans OS217.</title>
        <authorList>
            <consortium name="US DOE Joint Genome Institute"/>
            <person name="Copeland A."/>
            <person name="Lucas S."/>
            <person name="Lapidus A."/>
            <person name="Barry K."/>
            <person name="Detter J.C."/>
            <person name="Glavina del Rio T."/>
            <person name="Hammon N."/>
            <person name="Israni S."/>
            <person name="Dalin E."/>
            <person name="Tice H."/>
            <person name="Pitluck S."/>
            <person name="Brettin T."/>
            <person name="Bruce D."/>
            <person name="Han C."/>
            <person name="Tapia R."/>
            <person name="Gilna P."/>
            <person name="Kiss H."/>
            <person name="Schmutz J."/>
            <person name="Larimer F."/>
            <person name="Land M."/>
            <person name="Hauser L."/>
            <person name="Kyrpides N."/>
            <person name="Lykidis A."/>
            <person name="Richardson P."/>
        </authorList>
    </citation>
    <scope>NUCLEOTIDE SEQUENCE [LARGE SCALE GENOMIC DNA]</scope>
    <source>
        <strain>OS217 / ATCC BAA-1090 / DSM 15013</strain>
    </source>
</reference>
<name>HMUV_SHEDO</name>
<comment type="function">
    <text evidence="1">Part of the ABC transporter complex HmuTUV involved in hemin import. Responsible for energy coupling to the transport system.</text>
</comment>
<comment type="subunit">
    <text evidence="1">The complex is composed of two ATP-binding proteins (HmuV), two transmembrane proteins (HmuU) and a solute-binding protein (HmuT).</text>
</comment>
<comment type="subcellular location">
    <subcellularLocation>
        <location evidence="1">Cell inner membrane</location>
        <topology evidence="1">Peripheral membrane protein</topology>
    </subcellularLocation>
</comment>
<comment type="similarity">
    <text evidence="1">Belongs to the ABC transporter superfamily. Heme (hemin) importer (TC 3.A.1.14.5) family.</text>
</comment>
<organism>
    <name type="scientific">Shewanella denitrificans (strain OS217 / ATCC BAA-1090 / DSM 15013)</name>
    <dbReference type="NCBI Taxonomy" id="318161"/>
    <lineage>
        <taxon>Bacteria</taxon>
        <taxon>Pseudomonadati</taxon>
        <taxon>Pseudomonadota</taxon>
        <taxon>Gammaproteobacteria</taxon>
        <taxon>Alteromonadales</taxon>
        <taxon>Shewanellaceae</taxon>
        <taxon>Shewanella</taxon>
    </lineage>
</organism>
<evidence type="ECO:0000255" key="1">
    <source>
        <dbReference type="HAMAP-Rule" id="MF_01718"/>
    </source>
</evidence>
<feature type="chain" id="PRO_0000277707" description="Hemin import ATP-binding protein HmuV">
    <location>
        <begin position="1"/>
        <end position="254"/>
    </location>
</feature>
<feature type="domain" description="ABC transporter" evidence="1">
    <location>
        <begin position="2"/>
        <end position="239"/>
    </location>
</feature>
<feature type="binding site" evidence="1">
    <location>
        <begin position="34"/>
        <end position="41"/>
    </location>
    <ligand>
        <name>ATP</name>
        <dbReference type="ChEBI" id="CHEBI:30616"/>
    </ligand>
</feature>
<protein>
    <recommendedName>
        <fullName evidence="1">Hemin import ATP-binding protein HmuV</fullName>
        <ecNumber evidence="1">7.6.2.-</ecNumber>
    </recommendedName>
</protein>
<keyword id="KW-0067">ATP-binding</keyword>
<keyword id="KW-0997">Cell inner membrane</keyword>
<keyword id="KW-1003">Cell membrane</keyword>
<keyword id="KW-0472">Membrane</keyword>
<keyword id="KW-0547">Nucleotide-binding</keyword>
<keyword id="KW-1185">Reference proteome</keyword>
<keyword id="KW-1278">Translocase</keyword>
<keyword id="KW-0813">Transport</keyword>